<keyword id="KW-0004">4Fe-4S</keyword>
<keyword id="KW-0342">GTP-binding</keyword>
<keyword id="KW-0408">Iron</keyword>
<keyword id="KW-0411">Iron-sulfur</keyword>
<keyword id="KW-0456">Lyase</keyword>
<keyword id="KW-0479">Metal-binding</keyword>
<keyword id="KW-0501">Molybdenum cofactor biosynthesis</keyword>
<keyword id="KW-0547">Nucleotide-binding</keyword>
<keyword id="KW-1185">Reference proteome</keyword>
<keyword id="KW-0949">S-adenosyl-L-methionine</keyword>
<organism>
    <name type="scientific">Rhizobium meliloti (strain 1021)</name>
    <name type="common">Ensifer meliloti</name>
    <name type="synonym">Sinorhizobium meliloti</name>
    <dbReference type="NCBI Taxonomy" id="266834"/>
    <lineage>
        <taxon>Bacteria</taxon>
        <taxon>Pseudomonadati</taxon>
        <taxon>Pseudomonadota</taxon>
        <taxon>Alphaproteobacteria</taxon>
        <taxon>Hyphomicrobiales</taxon>
        <taxon>Rhizobiaceae</taxon>
        <taxon>Sinorhizobium/Ensifer group</taxon>
        <taxon>Sinorhizobium</taxon>
    </lineage>
</organism>
<protein>
    <recommendedName>
        <fullName evidence="1">GTP 3',8-cyclase</fullName>
        <ecNumber evidence="1">4.1.99.22</ecNumber>
    </recommendedName>
    <alternativeName>
        <fullName evidence="1">Molybdenum cofactor biosynthesis protein A</fullName>
    </alternativeName>
</protein>
<proteinExistence type="inferred from homology"/>
<sequence length="349" mass="38916">MNTAAIDQTDARPLDTTTAPMVDPFGRAVTYLRVSVTDRCDFRCTYCMAEHMAFLPKKDLLTLEELQRLCSAFIAKGVRKLRLTGGEPLVRKNIMFLIRELGKEIEAGRLDELTLTTNGSQLSKFAAELVDCGVRRINVSLDTLDPDKFRQITRWGELARVLEGIDAALAAGLKVKINAVALKDFNDAEIPELMRWAHGRGMDLTLIETMPMGEVDEDRTDHYLPLSEMRRRLEADFTLSDIPYRTGGPARYVEVAETGGRLGLITPLTHNFCESCNRVRLTCTGTLYMCLGQNDAADLRAALRATDDDAYLAQVIDEAIGRKPKGHDFIIDREHNRPAVARHMSVTGG</sequence>
<accession>Q92PB4</accession>
<name>MOAA_RHIME</name>
<dbReference type="EC" id="4.1.99.22" evidence="1"/>
<dbReference type="EMBL" id="AL591688">
    <property type="protein sequence ID" value="CAC46443.1"/>
    <property type="molecule type" value="Genomic_DNA"/>
</dbReference>
<dbReference type="RefSeq" id="NP_385970.1">
    <property type="nucleotide sequence ID" value="NC_003047.1"/>
</dbReference>
<dbReference type="RefSeq" id="WP_010969526.1">
    <property type="nucleotide sequence ID" value="NC_003047.1"/>
</dbReference>
<dbReference type="SMR" id="Q92PB4"/>
<dbReference type="EnsemblBacteria" id="CAC46443">
    <property type="protein sequence ID" value="CAC46443"/>
    <property type="gene ID" value="SMc00144"/>
</dbReference>
<dbReference type="KEGG" id="sme:SMc00144"/>
<dbReference type="PATRIC" id="fig|266834.11.peg.3307"/>
<dbReference type="eggNOG" id="COG2896">
    <property type="taxonomic scope" value="Bacteria"/>
</dbReference>
<dbReference type="HOGENOM" id="CLU_009273_0_1_5"/>
<dbReference type="OrthoDB" id="9763993at2"/>
<dbReference type="UniPathway" id="UPA00344"/>
<dbReference type="Proteomes" id="UP000001976">
    <property type="component" value="Chromosome"/>
</dbReference>
<dbReference type="GO" id="GO:0051539">
    <property type="term" value="F:4 iron, 4 sulfur cluster binding"/>
    <property type="evidence" value="ECO:0007669"/>
    <property type="project" value="UniProtKB-UniRule"/>
</dbReference>
<dbReference type="GO" id="GO:0061799">
    <property type="term" value="F:cyclic pyranopterin monophosphate synthase activity"/>
    <property type="evidence" value="ECO:0007669"/>
    <property type="project" value="TreeGrafter"/>
</dbReference>
<dbReference type="GO" id="GO:0061798">
    <property type="term" value="F:GTP 3',8'-cyclase activity"/>
    <property type="evidence" value="ECO:0007669"/>
    <property type="project" value="UniProtKB-UniRule"/>
</dbReference>
<dbReference type="GO" id="GO:0005525">
    <property type="term" value="F:GTP binding"/>
    <property type="evidence" value="ECO:0007669"/>
    <property type="project" value="UniProtKB-UniRule"/>
</dbReference>
<dbReference type="GO" id="GO:0046872">
    <property type="term" value="F:metal ion binding"/>
    <property type="evidence" value="ECO:0007669"/>
    <property type="project" value="UniProtKB-KW"/>
</dbReference>
<dbReference type="GO" id="GO:1904047">
    <property type="term" value="F:S-adenosyl-L-methionine binding"/>
    <property type="evidence" value="ECO:0007669"/>
    <property type="project" value="UniProtKB-UniRule"/>
</dbReference>
<dbReference type="GO" id="GO:0006777">
    <property type="term" value="P:Mo-molybdopterin cofactor biosynthetic process"/>
    <property type="evidence" value="ECO:0007669"/>
    <property type="project" value="UniProtKB-UniRule"/>
</dbReference>
<dbReference type="CDD" id="cd01335">
    <property type="entry name" value="Radical_SAM"/>
    <property type="match status" value="1"/>
</dbReference>
<dbReference type="CDD" id="cd21117">
    <property type="entry name" value="Twitch_MoaA"/>
    <property type="match status" value="1"/>
</dbReference>
<dbReference type="Gene3D" id="3.20.20.70">
    <property type="entry name" value="Aldolase class I"/>
    <property type="match status" value="1"/>
</dbReference>
<dbReference type="HAMAP" id="MF_01225_B">
    <property type="entry name" value="MoaA_B"/>
    <property type="match status" value="1"/>
</dbReference>
<dbReference type="InterPro" id="IPR013785">
    <property type="entry name" value="Aldolase_TIM"/>
</dbReference>
<dbReference type="InterPro" id="IPR006638">
    <property type="entry name" value="Elp3/MiaA/NifB-like_rSAM"/>
</dbReference>
<dbReference type="InterPro" id="IPR013483">
    <property type="entry name" value="MoaA"/>
</dbReference>
<dbReference type="InterPro" id="IPR000385">
    <property type="entry name" value="MoaA_NifB_PqqE_Fe-S-bd_CS"/>
</dbReference>
<dbReference type="InterPro" id="IPR010505">
    <property type="entry name" value="MoaA_twitch"/>
</dbReference>
<dbReference type="InterPro" id="IPR050105">
    <property type="entry name" value="MoCo_biosynth_MoaA/MoaC"/>
</dbReference>
<dbReference type="InterPro" id="IPR007197">
    <property type="entry name" value="rSAM"/>
</dbReference>
<dbReference type="NCBIfam" id="TIGR02666">
    <property type="entry name" value="moaA"/>
    <property type="match status" value="1"/>
</dbReference>
<dbReference type="PANTHER" id="PTHR22960:SF0">
    <property type="entry name" value="MOLYBDENUM COFACTOR BIOSYNTHESIS PROTEIN 1"/>
    <property type="match status" value="1"/>
</dbReference>
<dbReference type="PANTHER" id="PTHR22960">
    <property type="entry name" value="MOLYBDOPTERIN COFACTOR SYNTHESIS PROTEIN A"/>
    <property type="match status" value="1"/>
</dbReference>
<dbReference type="Pfam" id="PF13353">
    <property type="entry name" value="Fer4_12"/>
    <property type="match status" value="1"/>
</dbReference>
<dbReference type="Pfam" id="PF06463">
    <property type="entry name" value="Mob_synth_C"/>
    <property type="match status" value="1"/>
</dbReference>
<dbReference type="Pfam" id="PF04055">
    <property type="entry name" value="Radical_SAM"/>
    <property type="match status" value="1"/>
</dbReference>
<dbReference type="SFLD" id="SFLDG01383">
    <property type="entry name" value="cyclic_pyranopterin_phosphate"/>
    <property type="match status" value="1"/>
</dbReference>
<dbReference type="SFLD" id="SFLDS00029">
    <property type="entry name" value="Radical_SAM"/>
    <property type="match status" value="1"/>
</dbReference>
<dbReference type="SMART" id="SM00729">
    <property type="entry name" value="Elp3"/>
    <property type="match status" value="1"/>
</dbReference>
<dbReference type="SUPFAM" id="SSF102114">
    <property type="entry name" value="Radical SAM enzymes"/>
    <property type="match status" value="1"/>
</dbReference>
<dbReference type="PROSITE" id="PS01305">
    <property type="entry name" value="MOAA_NIFB_PQQE"/>
    <property type="match status" value="1"/>
</dbReference>
<dbReference type="PROSITE" id="PS51918">
    <property type="entry name" value="RADICAL_SAM"/>
    <property type="match status" value="1"/>
</dbReference>
<comment type="function">
    <text evidence="1">Catalyzes the cyclization of GTP to (8S)-3',8-cyclo-7,8-dihydroguanosine 5'-triphosphate.</text>
</comment>
<comment type="catalytic activity">
    <reaction evidence="1">
        <text>GTP + AH2 + S-adenosyl-L-methionine = (8S)-3',8-cyclo-7,8-dihydroguanosine 5'-triphosphate + 5'-deoxyadenosine + L-methionine + A + H(+)</text>
        <dbReference type="Rhea" id="RHEA:49576"/>
        <dbReference type="ChEBI" id="CHEBI:13193"/>
        <dbReference type="ChEBI" id="CHEBI:15378"/>
        <dbReference type="ChEBI" id="CHEBI:17319"/>
        <dbReference type="ChEBI" id="CHEBI:17499"/>
        <dbReference type="ChEBI" id="CHEBI:37565"/>
        <dbReference type="ChEBI" id="CHEBI:57844"/>
        <dbReference type="ChEBI" id="CHEBI:59789"/>
        <dbReference type="ChEBI" id="CHEBI:131766"/>
        <dbReference type="EC" id="4.1.99.22"/>
    </reaction>
</comment>
<comment type="cofactor">
    <cofactor evidence="1">
        <name>[4Fe-4S] cluster</name>
        <dbReference type="ChEBI" id="CHEBI:49883"/>
    </cofactor>
    <text evidence="1">Binds 2 [4Fe-4S] clusters. Binds 1 [4Fe-4S] cluster coordinated with 3 cysteines and an exchangeable S-adenosyl-L-methionine and 1 [4Fe-4S] cluster coordinated with 3 cysteines and the GTP-derived substrate.</text>
</comment>
<comment type="pathway">
    <text evidence="1">Cofactor biosynthesis; molybdopterin biosynthesis.</text>
</comment>
<comment type="subunit">
    <text evidence="1">Monomer and homodimer.</text>
</comment>
<comment type="similarity">
    <text evidence="1">Belongs to the radical SAM superfamily. MoaA family.</text>
</comment>
<gene>
    <name evidence="1" type="primary">moaA</name>
    <name type="ordered locus">R01864</name>
    <name type="ORF">SMc00144</name>
</gene>
<feature type="chain" id="PRO_0000152986" description="GTP 3',8-cyclase">
    <location>
        <begin position="1"/>
        <end position="349"/>
    </location>
</feature>
<feature type="domain" description="Radical SAM core" evidence="2">
    <location>
        <begin position="24"/>
        <end position="250"/>
    </location>
</feature>
<feature type="binding site" evidence="1">
    <location>
        <position position="33"/>
    </location>
    <ligand>
        <name>GTP</name>
        <dbReference type="ChEBI" id="CHEBI:37565"/>
    </ligand>
</feature>
<feature type="binding site" evidence="1">
    <location>
        <position position="40"/>
    </location>
    <ligand>
        <name>[4Fe-4S] cluster</name>
        <dbReference type="ChEBI" id="CHEBI:49883"/>
        <label>1</label>
        <note>4Fe-4S-S-AdoMet</note>
    </ligand>
</feature>
<feature type="binding site" evidence="1">
    <location>
        <position position="44"/>
    </location>
    <ligand>
        <name>[4Fe-4S] cluster</name>
        <dbReference type="ChEBI" id="CHEBI:49883"/>
        <label>1</label>
        <note>4Fe-4S-S-AdoMet</note>
    </ligand>
</feature>
<feature type="binding site" evidence="1">
    <location>
        <position position="46"/>
    </location>
    <ligand>
        <name>S-adenosyl-L-methionine</name>
        <dbReference type="ChEBI" id="CHEBI:59789"/>
    </ligand>
</feature>
<feature type="binding site" evidence="1">
    <location>
        <position position="47"/>
    </location>
    <ligand>
        <name>[4Fe-4S] cluster</name>
        <dbReference type="ChEBI" id="CHEBI:49883"/>
        <label>1</label>
        <note>4Fe-4S-S-AdoMet</note>
    </ligand>
</feature>
<feature type="binding site" evidence="1">
    <location>
        <position position="82"/>
    </location>
    <ligand>
        <name>GTP</name>
        <dbReference type="ChEBI" id="CHEBI:37565"/>
    </ligand>
</feature>
<feature type="binding site" evidence="1">
    <location>
        <position position="86"/>
    </location>
    <ligand>
        <name>S-adenosyl-L-methionine</name>
        <dbReference type="ChEBI" id="CHEBI:59789"/>
    </ligand>
</feature>
<feature type="binding site" evidence="1">
    <location>
        <position position="116"/>
    </location>
    <ligand>
        <name>GTP</name>
        <dbReference type="ChEBI" id="CHEBI:37565"/>
    </ligand>
</feature>
<feature type="binding site" evidence="1">
    <location>
        <position position="140"/>
    </location>
    <ligand>
        <name>S-adenosyl-L-methionine</name>
        <dbReference type="ChEBI" id="CHEBI:59789"/>
    </ligand>
</feature>
<feature type="binding site" evidence="1">
    <location>
        <position position="176"/>
    </location>
    <ligand>
        <name>GTP</name>
        <dbReference type="ChEBI" id="CHEBI:37565"/>
    </ligand>
</feature>
<feature type="binding site" evidence="1">
    <location>
        <position position="210"/>
    </location>
    <ligand>
        <name>S-adenosyl-L-methionine</name>
        <dbReference type="ChEBI" id="CHEBI:59789"/>
    </ligand>
</feature>
<feature type="binding site" evidence="1">
    <location>
        <position position="273"/>
    </location>
    <ligand>
        <name>[4Fe-4S] cluster</name>
        <dbReference type="ChEBI" id="CHEBI:49883"/>
        <label>2</label>
        <note>4Fe-4S-substrate</note>
    </ligand>
</feature>
<feature type="binding site" evidence="1">
    <location>
        <position position="276"/>
    </location>
    <ligand>
        <name>[4Fe-4S] cluster</name>
        <dbReference type="ChEBI" id="CHEBI:49883"/>
        <label>2</label>
        <note>4Fe-4S-substrate</note>
    </ligand>
</feature>
<feature type="binding site" evidence="1">
    <location>
        <begin position="278"/>
        <end position="280"/>
    </location>
    <ligand>
        <name>GTP</name>
        <dbReference type="ChEBI" id="CHEBI:37565"/>
    </ligand>
</feature>
<feature type="binding site" evidence="1">
    <location>
        <position position="290"/>
    </location>
    <ligand>
        <name>[4Fe-4S] cluster</name>
        <dbReference type="ChEBI" id="CHEBI:49883"/>
        <label>2</label>
        <note>4Fe-4S-substrate</note>
    </ligand>
</feature>
<evidence type="ECO:0000255" key="1">
    <source>
        <dbReference type="HAMAP-Rule" id="MF_01225"/>
    </source>
</evidence>
<evidence type="ECO:0000255" key="2">
    <source>
        <dbReference type="PROSITE-ProRule" id="PRU01266"/>
    </source>
</evidence>
<reference key="1">
    <citation type="journal article" date="2001" name="Proc. Natl. Acad. Sci. U.S.A.">
        <title>Analysis of the chromosome sequence of the legume symbiont Sinorhizobium meliloti strain 1021.</title>
        <authorList>
            <person name="Capela D."/>
            <person name="Barloy-Hubler F."/>
            <person name="Gouzy J."/>
            <person name="Bothe G."/>
            <person name="Ampe F."/>
            <person name="Batut J."/>
            <person name="Boistard P."/>
            <person name="Becker A."/>
            <person name="Boutry M."/>
            <person name="Cadieu E."/>
            <person name="Dreano S."/>
            <person name="Gloux S."/>
            <person name="Godrie T."/>
            <person name="Goffeau A."/>
            <person name="Kahn D."/>
            <person name="Kiss E."/>
            <person name="Lelaure V."/>
            <person name="Masuy D."/>
            <person name="Pohl T."/>
            <person name="Portetelle D."/>
            <person name="Puehler A."/>
            <person name="Purnelle B."/>
            <person name="Ramsperger U."/>
            <person name="Renard C."/>
            <person name="Thebault P."/>
            <person name="Vandenbol M."/>
            <person name="Weidner S."/>
            <person name="Galibert F."/>
        </authorList>
    </citation>
    <scope>NUCLEOTIDE SEQUENCE [LARGE SCALE GENOMIC DNA]</scope>
    <source>
        <strain>1021</strain>
    </source>
</reference>
<reference key="2">
    <citation type="journal article" date="2001" name="Science">
        <title>The composite genome of the legume symbiont Sinorhizobium meliloti.</title>
        <authorList>
            <person name="Galibert F."/>
            <person name="Finan T.M."/>
            <person name="Long S.R."/>
            <person name="Puehler A."/>
            <person name="Abola P."/>
            <person name="Ampe F."/>
            <person name="Barloy-Hubler F."/>
            <person name="Barnett M.J."/>
            <person name="Becker A."/>
            <person name="Boistard P."/>
            <person name="Bothe G."/>
            <person name="Boutry M."/>
            <person name="Bowser L."/>
            <person name="Buhrmester J."/>
            <person name="Cadieu E."/>
            <person name="Capela D."/>
            <person name="Chain P."/>
            <person name="Cowie A."/>
            <person name="Davis R.W."/>
            <person name="Dreano S."/>
            <person name="Federspiel N.A."/>
            <person name="Fisher R.F."/>
            <person name="Gloux S."/>
            <person name="Godrie T."/>
            <person name="Goffeau A."/>
            <person name="Golding B."/>
            <person name="Gouzy J."/>
            <person name="Gurjal M."/>
            <person name="Hernandez-Lucas I."/>
            <person name="Hong A."/>
            <person name="Huizar L."/>
            <person name="Hyman R.W."/>
            <person name="Jones T."/>
            <person name="Kahn D."/>
            <person name="Kahn M.L."/>
            <person name="Kalman S."/>
            <person name="Keating D.H."/>
            <person name="Kiss E."/>
            <person name="Komp C."/>
            <person name="Lelaure V."/>
            <person name="Masuy D."/>
            <person name="Palm C."/>
            <person name="Peck M.C."/>
            <person name="Pohl T.M."/>
            <person name="Portetelle D."/>
            <person name="Purnelle B."/>
            <person name="Ramsperger U."/>
            <person name="Surzycki R."/>
            <person name="Thebault P."/>
            <person name="Vandenbol M."/>
            <person name="Vorhoelter F.J."/>
            <person name="Weidner S."/>
            <person name="Wells D.H."/>
            <person name="Wong K."/>
            <person name="Yeh K.-C."/>
            <person name="Batut J."/>
        </authorList>
    </citation>
    <scope>NUCLEOTIDE SEQUENCE [LARGE SCALE GENOMIC DNA]</scope>
    <source>
        <strain>1021</strain>
    </source>
</reference>